<evidence type="ECO:0000255" key="1">
    <source>
        <dbReference type="HAMAP-Rule" id="MF_00339"/>
    </source>
</evidence>
<name>PFKA_CLOB6</name>
<proteinExistence type="inferred from homology"/>
<keyword id="KW-0021">Allosteric enzyme</keyword>
<keyword id="KW-0067">ATP-binding</keyword>
<keyword id="KW-0963">Cytoplasm</keyword>
<keyword id="KW-0324">Glycolysis</keyword>
<keyword id="KW-0418">Kinase</keyword>
<keyword id="KW-0460">Magnesium</keyword>
<keyword id="KW-0479">Metal-binding</keyword>
<keyword id="KW-0547">Nucleotide-binding</keyword>
<keyword id="KW-0808">Transferase</keyword>
<gene>
    <name evidence="1" type="primary">pfkA</name>
    <name type="ordered locus">CLJ_B3676</name>
</gene>
<accession>C3KV06</accession>
<dbReference type="EC" id="2.7.1.11" evidence="1"/>
<dbReference type="EMBL" id="CP001083">
    <property type="protein sequence ID" value="ACQ51660.1"/>
    <property type="molecule type" value="Genomic_DNA"/>
</dbReference>
<dbReference type="RefSeq" id="WP_003360293.1">
    <property type="nucleotide sequence ID" value="NC_012658.1"/>
</dbReference>
<dbReference type="SMR" id="C3KV06"/>
<dbReference type="KEGG" id="cbi:CLJ_B3676"/>
<dbReference type="HOGENOM" id="CLU_020655_0_1_9"/>
<dbReference type="UniPathway" id="UPA00109">
    <property type="reaction ID" value="UER00182"/>
</dbReference>
<dbReference type="Proteomes" id="UP000002333">
    <property type="component" value="Chromosome"/>
</dbReference>
<dbReference type="GO" id="GO:0005945">
    <property type="term" value="C:6-phosphofructokinase complex"/>
    <property type="evidence" value="ECO:0007669"/>
    <property type="project" value="TreeGrafter"/>
</dbReference>
<dbReference type="GO" id="GO:0003872">
    <property type="term" value="F:6-phosphofructokinase activity"/>
    <property type="evidence" value="ECO:0007669"/>
    <property type="project" value="UniProtKB-UniRule"/>
</dbReference>
<dbReference type="GO" id="GO:0016208">
    <property type="term" value="F:AMP binding"/>
    <property type="evidence" value="ECO:0007669"/>
    <property type="project" value="TreeGrafter"/>
</dbReference>
<dbReference type="GO" id="GO:0005524">
    <property type="term" value="F:ATP binding"/>
    <property type="evidence" value="ECO:0007669"/>
    <property type="project" value="UniProtKB-KW"/>
</dbReference>
<dbReference type="GO" id="GO:0070095">
    <property type="term" value="F:fructose-6-phosphate binding"/>
    <property type="evidence" value="ECO:0007669"/>
    <property type="project" value="TreeGrafter"/>
</dbReference>
<dbReference type="GO" id="GO:0042802">
    <property type="term" value="F:identical protein binding"/>
    <property type="evidence" value="ECO:0007669"/>
    <property type="project" value="TreeGrafter"/>
</dbReference>
<dbReference type="GO" id="GO:0046872">
    <property type="term" value="F:metal ion binding"/>
    <property type="evidence" value="ECO:0007669"/>
    <property type="project" value="UniProtKB-KW"/>
</dbReference>
<dbReference type="GO" id="GO:0048029">
    <property type="term" value="F:monosaccharide binding"/>
    <property type="evidence" value="ECO:0007669"/>
    <property type="project" value="TreeGrafter"/>
</dbReference>
<dbReference type="GO" id="GO:0061621">
    <property type="term" value="P:canonical glycolysis"/>
    <property type="evidence" value="ECO:0007669"/>
    <property type="project" value="TreeGrafter"/>
</dbReference>
<dbReference type="GO" id="GO:0030388">
    <property type="term" value="P:fructose 1,6-bisphosphate metabolic process"/>
    <property type="evidence" value="ECO:0007669"/>
    <property type="project" value="TreeGrafter"/>
</dbReference>
<dbReference type="GO" id="GO:0006002">
    <property type="term" value="P:fructose 6-phosphate metabolic process"/>
    <property type="evidence" value="ECO:0007669"/>
    <property type="project" value="InterPro"/>
</dbReference>
<dbReference type="FunFam" id="3.40.50.450:FF:000001">
    <property type="entry name" value="ATP-dependent 6-phosphofructokinase"/>
    <property type="match status" value="1"/>
</dbReference>
<dbReference type="FunFam" id="3.40.50.460:FF:000002">
    <property type="entry name" value="ATP-dependent 6-phosphofructokinase"/>
    <property type="match status" value="1"/>
</dbReference>
<dbReference type="Gene3D" id="3.40.50.450">
    <property type="match status" value="1"/>
</dbReference>
<dbReference type="Gene3D" id="3.40.50.460">
    <property type="entry name" value="Phosphofructokinase domain"/>
    <property type="match status" value="1"/>
</dbReference>
<dbReference type="HAMAP" id="MF_00339">
    <property type="entry name" value="Phosphofructokinase_I_B1"/>
    <property type="match status" value="1"/>
</dbReference>
<dbReference type="InterPro" id="IPR022953">
    <property type="entry name" value="ATP_PFK"/>
</dbReference>
<dbReference type="InterPro" id="IPR012003">
    <property type="entry name" value="ATP_PFK_prok-type"/>
</dbReference>
<dbReference type="InterPro" id="IPR012828">
    <property type="entry name" value="PFKA_ATP_prok"/>
</dbReference>
<dbReference type="InterPro" id="IPR015912">
    <property type="entry name" value="Phosphofructokinase_CS"/>
</dbReference>
<dbReference type="InterPro" id="IPR000023">
    <property type="entry name" value="Phosphofructokinase_dom"/>
</dbReference>
<dbReference type="InterPro" id="IPR035966">
    <property type="entry name" value="PKF_sf"/>
</dbReference>
<dbReference type="NCBIfam" id="TIGR02482">
    <property type="entry name" value="PFKA_ATP"/>
    <property type="match status" value="1"/>
</dbReference>
<dbReference type="NCBIfam" id="NF002872">
    <property type="entry name" value="PRK03202.1"/>
    <property type="match status" value="1"/>
</dbReference>
<dbReference type="PANTHER" id="PTHR13697:SF4">
    <property type="entry name" value="ATP-DEPENDENT 6-PHOSPHOFRUCTOKINASE"/>
    <property type="match status" value="1"/>
</dbReference>
<dbReference type="PANTHER" id="PTHR13697">
    <property type="entry name" value="PHOSPHOFRUCTOKINASE"/>
    <property type="match status" value="1"/>
</dbReference>
<dbReference type="Pfam" id="PF00365">
    <property type="entry name" value="PFK"/>
    <property type="match status" value="1"/>
</dbReference>
<dbReference type="PIRSF" id="PIRSF000532">
    <property type="entry name" value="ATP_PFK_prok"/>
    <property type="match status" value="1"/>
</dbReference>
<dbReference type="PRINTS" id="PR00476">
    <property type="entry name" value="PHFRCTKINASE"/>
</dbReference>
<dbReference type="SUPFAM" id="SSF53784">
    <property type="entry name" value="Phosphofructokinase"/>
    <property type="match status" value="1"/>
</dbReference>
<dbReference type="PROSITE" id="PS00433">
    <property type="entry name" value="PHOSPHOFRUCTOKINASE"/>
    <property type="match status" value="1"/>
</dbReference>
<comment type="function">
    <text evidence="1">Catalyzes the phosphorylation of D-fructose 6-phosphate to fructose 1,6-bisphosphate by ATP, the first committing step of glycolysis.</text>
</comment>
<comment type="catalytic activity">
    <reaction evidence="1">
        <text>beta-D-fructose 6-phosphate + ATP = beta-D-fructose 1,6-bisphosphate + ADP + H(+)</text>
        <dbReference type="Rhea" id="RHEA:16109"/>
        <dbReference type="ChEBI" id="CHEBI:15378"/>
        <dbReference type="ChEBI" id="CHEBI:30616"/>
        <dbReference type="ChEBI" id="CHEBI:32966"/>
        <dbReference type="ChEBI" id="CHEBI:57634"/>
        <dbReference type="ChEBI" id="CHEBI:456216"/>
        <dbReference type="EC" id="2.7.1.11"/>
    </reaction>
</comment>
<comment type="cofactor">
    <cofactor evidence="1">
        <name>Mg(2+)</name>
        <dbReference type="ChEBI" id="CHEBI:18420"/>
    </cofactor>
</comment>
<comment type="activity regulation">
    <text evidence="1">Allosterically activated by ADP and other diphosphonucleosides, and allosterically inhibited by phosphoenolpyruvate.</text>
</comment>
<comment type="pathway">
    <text evidence="1">Carbohydrate degradation; glycolysis; D-glyceraldehyde 3-phosphate and glycerone phosphate from D-glucose: step 3/4.</text>
</comment>
<comment type="subunit">
    <text evidence="1">Homotetramer.</text>
</comment>
<comment type="subcellular location">
    <subcellularLocation>
        <location evidence="1">Cytoplasm</location>
    </subcellularLocation>
</comment>
<comment type="similarity">
    <text evidence="1">Belongs to the phosphofructokinase type A (PFKA) family. ATP-dependent PFK group I subfamily. Prokaryotic clade 'B1' sub-subfamily.</text>
</comment>
<feature type="chain" id="PRO_1000205244" description="ATP-dependent 6-phosphofructokinase">
    <location>
        <begin position="1"/>
        <end position="319"/>
    </location>
</feature>
<feature type="active site" description="Proton acceptor" evidence="1">
    <location>
        <position position="127"/>
    </location>
</feature>
<feature type="binding site" evidence="1">
    <location>
        <position position="11"/>
    </location>
    <ligand>
        <name>ATP</name>
        <dbReference type="ChEBI" id="CHEBI:30616"/>
    </ligand>
</feature>
<feature type="binding site" evidence="1">
    <location>
        <begin position="21"/>
        <end position="25"/>
    </location>
    <ligand>
        <name>ADP</name>
        <dbReference type="ChEBI" id="CHEBI:456216"/>
        <note>allosteric activator; ligand shared between dimeric partners</note>
    </ligand>
</feature>
<feature type="binding site" evidence="1">
    <location>
        <begin position="72"/>
        <end position="73"/>
    </location>
    <ligand>
        <name>ATP</name>
        <dbReference type="ChEBI" id="CHEBI:30616"/>
    </ligand>
</feature>
<feature type="binding site" evidence="1">
    <location>
        <begin position="102"/>
        <end position="105"/>
    </location>
    <ligand>
        <name>ATP</name>
        <dbReference type="ChEBI" id="CHEBI:30616"/>
    </ligand>
</feature>
<feature type="binding site" evidence="1">
    <location>
        <position position="103"/>
    </location>
    <ligand>
        <name>Mg(2+)</name>
        <dbReference type="ChEBI" id="CHEBI:18420"/>
        <note>catalytic</note>
    </ligand>
</feature>
<feature type="binding site" description="in other chain" evidence="1">
    <location>
        <begin position="125"/>
        <end position="127"/>
    </location>
    <ligand>
        <name>substrate</name>
        <note>ligand shared between dimeric partners</note>
    </ligand>
</feature>
<feature type="binding site" description="in other chain" evidence="1">
    <location>
        <position position="154"/>
    </location>
    <ligand>
        <name>ADP</name>
        <dbReference type="ChEBI" id="CHEBI:456216"/>
        <note>allosteric activator; ligand shared between dimeric partners</note>
    </ligand>
</feature>
<feature type="binding site" evidence="1">
    <location>
        <position position="162"/>
    </location>
    <ligand>
        <name>substrate</name>
        <note>ligand shared between dimeric partners</note>
    </ligand>
</feature>
<feature type="binding site" description="in other chain" evidence="1">
    <location>
        <begin position="169"/>
        <end position="171"/>
    </location>
    <ligand>
        <name>substrate</name>
        <note>ligand shared between dimeric partners</note>
    </ligand>
</feature>
<feature type="binding site" description="in other chain" evidence="1">
    <location>
        <begin position="185"/>
        <end position="187"/>
    </location>
    <ligand>
        <name>ADP</name>
        <dbReference type="ChEBI" id="CHEBI:456216"/>
        <note>allosteric activator; ligand shared between dimeric partners</note>
    </ligand>
</feature>
<feature type="binding site" description="in other chain" evidence="1">
    <location>
        <position position="211"/>
    </location>
    <ligand>
        <name>ADP</name>
        <dbReference type="ChEBI" id="CHEBI:456216"/>
        <note>allosteric activator; ligand shared between dimeric partners</note>
    </ligand>
</feature>
<feature type="binding site" description="in other chain" evidence="1">
    <location>
        <begin position="213"/>
        <end position="215"/>
    </location>
    <ligand>
        <name>ADP</name>
        <dbReference type="ChEBI" id="CHEBI:456216"/>
        <note>allosteric activator; ligand shared between dimeric partners</note>
    </ligand>
</feature>
<feature type="binding site" description="in other chain" evidence="1">
    <location>
        <position position="222"/>
    </location>
    <ligand>
        <name>substrate</name>
        <note>ligand shared between dimeric partners</note>
    </ligand>
</feature>
<feature type="binding site" evidence="1">
    <location>
        <position position="243"/>
    </location>
    <ligand>
        <name>substrate</name>
        <note>ligand shared between dimeric partners</note>
    </ligand>
</feature>
<feature type="binding site" description="in other chain" evidence="1">
    <location>
        <begin position="249"/>
        <end position="252"/>
    </location>
    <ligand>
        <name>substrate</name>
        <note>ligand shared between dimeric partners</note>
    </ligand>
</feature>
<sequence length="319" mass="34204">MRTIAVLTSGGDAPGMNAAIRAVVRTGLEKGLKVMGIQRGYNGLINGEIFEMDTHSVSDIIQRGGTILRTARCEEFRTEQGREKAAKILKAFGIDGLVVIGGDGSFHGAQLLSKLGINTVGLPGTIDNDLAYTDYTIGFDTSINTVLDAINKLRDTSTSHERVSVVEVMGRNCGDIALYTGVAGGAESIIIPEKEYNADKLCKQILQGKLKGKMHNLVLLAEGVGGANELAKYIEEVTGIETRSTILGHIQRGGSPTCMDRILASRMAYKAVELLISGKSSRVVGIKNGEIIDMDIDEALAVERSFDQELYDIATILSK</sequence>
<reference key="1">
    <citation type="submission" date="2008-05" db="EMBL/GenBank/DDBJ databases">
        <title>Genome sequence of Clostridium botulinum Ba4 strain 657.</title>
        <authorList>
            <person name="Shrivastava S."/>
            <person name="Brown J.L."/>
            <person name="Bruce D."/>
            <person name="Detter C."/>
            <person name="Munk C."/>
            <person name="Smith L.A."/>
            <person name="Smith T.J."/>
            <person name="Sutton G."/>
            <person name="Brettin T.S."/>
        </authorList>
    </citation>
    <scope>NUCLEOTIDE SEQUENCE [LARGE SCALE GENOMIC DNA]</scope>
    <source>
        <strain>657 / Type Ba4</strain>
    </source>
</reference>
<organism>
    <name type="scientific">Clostridium botulinum (strain 657 / Type Ba4)</name>
    <dbReference type="NCBI Taxonomy" id="515621"/>
    <lineage>
        <taxon>Bacteria</taxon>
        <taxon>Bacillati</taxon>
        <taxon>Bacillota</taxon>
        <taxon>Clostridia</taxon>
        <taxon>Eubacteriales</taxon>
        <taxon>Clostridiaceae</taxon>
        <taxon>Clostridium</taxon>
    </lineage>
</organism>
<protein>
    <recommendedName>
        <fullName evidence="1">ATP-dependent 6-phosphofructokinase</fullName>
        <shortName evidence="1">ATP-PFK</shortName>
        <shortName evidence="1">Phosphofructokinase</shortName>
        <ecNumber evidence="1">2.7.1.11</ecNumber>
    </recommendedName>
    <alternativeName>
        <fullName evidence="1">Phosphohexokinase</fullName>
    </alternativeName>
</protein>